<evidence type="ECO:0000255" key="1">
    <source>
        <dbReference type="HAMAP-Rule" id="MF_00636"/>
    </source>
</evidence>
<name>Y2894_PSYIN</name>
<keyword id="KW-0067">ATP-binding</keyword>
<keyword id="KW-0342">GTP-binding</keyword>
<keyword id="KW-0547">Nucleotide-binding</keyword>
<keyword id="KW-1185">Reference proteome</keyword>
<sequence length="282" mass="32038">MKLIVISGRSGSGKTIALHVLEDLGYNCIDGVPFQLLAQLIDTVDPKNNKVAISLDIRNLPTDASQIQTLLSSLQQKVEVEIIYLDAISAELIRRYSETRRLHPLSKNKLSLSQALELENELLEPIHKRAALSIDTTTLSIHNLNERLKIHLQGSTKSNLLIIFQSFGFKNIHPDDADYIFDVRFLPNPHWEPTLQKYTGKDQPVKAFLNGHLVVKQTINQIENLFHSWLPYLEENNRNYVTIAIGCTGGKHRSVYVAEQLAAQFKQKYQVQIEHKGLKDQL</sequence>
<organism>
    <name type="scientific">Psychromonas ingrahamii (strain DSM 17664 / CCUG 51855 / 37)</name>
    <dbReference type="NCBI Taxonomy" id="357804"/>
    <lineage>
        <taxon>Bacteria</taxon>
        <taxon>Pseudomonadati</taxon>
        <taxon>Pseudomonadota</taxon>
        <taxon>Gammaproteobacteria</taxon>
        <taxon>Alteromonadales</taxon>
        <taxon>Psychromonadaceae</taxon>
        <taxon>Psychromonas</taxon>
    </lineage>
</organism>
<reference key="1">
    <citation type="journal article" date="2008" name="BMC Genomics">
        <title>Genomics of an extreme psychrophile, Psychromonas ingrahamii.</title>
        <authorList>
            <person name="Riley M."/>
            <person name="Staley J.T."/>
            <person name="Danchin A."/>
            <person name="Wang T.Z."/>
            <person name="Brettin T.S."/>
            <person name="Hauser L.J."/>
            <person name="Land M.L."/>
            <person name="Thompson L.S."/>
        </authorList>
    </citation>
    <scope>NUCLEOTIDE SEQUENCE [LARGE SCALE GENOMIC DNA]</scope>
    <source>
        <strain>DSM 17664 / CCUG 51855 / 37</strain>
    </source>
</reference>
<comment type="function">
    <text evidence="1">Displays ATPase and GTPase activities.</text>
</comment>
<comment type="similarity">
    <text evidence="1">Belongs to the RapZ-like family.</text>
</comment>
<feature type="chain" id="PRO_1000056847" description="Nucleotide-binding protein Ping_2894">
    <location>
        <begin position="1"/>
        <end position="282"/>
    </location>
</feature>
<feature type="binding site" evidence="1">
    <location>
        <begin position="8"/>
        <end position="15"/>
    </location>
    <ligand>
        <name>ATP</name>
        <dbReference type="ChEBI" id="CHEBI:30616"/>
    </ligand>
</feature>
<feature type="binding site" evidence="1">
    <location>
        <begin position="56"/>
        <end position="59"/>
    </location>
    <ligand>
        <name>GTP</name>
        <dbReference type="ChEBI" id="CHEBI:37565"/>
    </ligand>
</feature>
<accession>A1SYN3</accession>
<gene>
    <name type="ordered locus">Ping_2894</name>
</gene>
<protein>
    <recommendedName>
        <fullName evidence="1">Nucleotide-binding protein Ping_2894</fullName>
    </recommendedName>
</protein>
<proteinExistence type="inferred from homology"/>
<dbReference type="EMBL" id="CP000510">
    <property type="protein sequence ID" value="ABM04598.1"/>
    <property type="molecule type" value="Genomic_DNA"/>
</dbReference>
<dbReference type="RefSeq" id="WP_011771152.1">
    <property type="nucleotide sequence ID" value="NC_008709.1"/>
</dbReference>
<dbReference type="SMR" id="A1SYN3"/>
<dbReference type="STRING" id="357804.Ping_2894"/>
<dbReference type="KEGG" id="pin:Ping_2894"/>
<dbReference type="eggNOG" id="COG1660">
    <property type="taxonomic scope" value="Bacteria"/>
</dbReference>
<dbReference type="HOGENOM" id="CLU_059558_1_1_6"/>
<dbReference type="OrthoDB" id="9784461at2"/>
<dbReference type="Proteomes" id="UP000000639">
    <property type="component" value="Chromosome"/>
</dbReference>
<dbReference type="GO" id="GO:0005524">
    <property type="term" value="F:ATP binding"/>
    <property type="evidence" value="ECO:0007669"/>
    <property type="project" value="UniProtKB-UniRule"/>
</dbReference>
<dbReference type="GO" id="GO:0005525">
    <property type="term" value="F:GTP binding"/>
    <property type="evidence" value="ECO:0007669"/>
    <property type="project" value="UniProtKB-UniRule"/>
</dbReference>
<dbReference type="Gene3D" id="3.40.50.300">
    <property type="entry name" value="P-loop containing nucleotide triphosphate hydrolases"/>
    <property type="match status" value="1"/>
</dbReference>
<dbReference type="HAMAP" id="MF_00636">
    <property type="entry name" value="RapZ_like"/>
    <property type="match status" value="1"/>
</dbReference>
<dbReference type="InterPro" id="IPR027417">
    <property type="entry name" value="P-loop_NTPase"/>
</dbReference>
<dbReference type="InterPro" id="IPR005337">
    <property type="entry name" value="RapZ-like"/>
</dbReference>
<dbReference type="InterPro" id="IPR053930">
    <property type="entry name" value="RapZ-like_N"/>
</dbReference>
<dbReference type="InterPro" id="IPR053931">
    <property type="entry name" value="RapZ_C"/>
</dbReference>
<dbReference type="NCBIfam" id="NF003828">
    <property type="entry name" value="PRK05416.1"/>
    <property type="match status" value="1"/>
</dbReference>
<dbReference type="PANTHER" id="PTHR30448">
    <property type="entry name" value="RNASE ADAPTER PROTEIN RAPZ"/>
    <property type="match status" value="1"/>
</dbReference>
<dbReference type="PANTHER" id="PTHR30448:SF0">
    <property type="entry name" value="RNASE ADAPTER PROTEIN RAPZ"/>
    <property type="match status" value="1"/>
</dbReference>
<dbReference type="Pfam" id="PF22740">
    <property type="entry name" value="PapZ_C"/>
    <property type="match status" value="1"/>
</dbReference>
<dbReference type="Pfam" id="PF03668">
    <property type="entry name" value="RapZ-like_N"/>
    <property type="match status" value="1"/>
</dbReference>
<dbReference type="PIRSF" id="PIRSF005052">
    <property type="entry name" value="P-loopkin"/>
    <property type="match status" value="1"/>
</dbReference>
<dbReference type="SUPFAM" id="SSF52540">
    <property type="entry name" value="P-loop containing nucleoside triphosphate hydrolases"/>
    <property type="match status" value="1"/>
</dbReference>